<gene>
    <name type="primary">uxuA</name>
    <name type="ordered locus">HI_0055</name>
</gene>
<feature type="chain" id="PRO_0000170675" description="Mannonate dehydratase">
    <location>
        <begin position="1"/>
        <end position="394"/>
    </location>
</feature>
<keyword id="KW-0408">Iron</keyword>
<keyword id="KW-0456">Lyase</keyword>
<keyword id="KW-0464">Manganese</keyword>
<keyword id="KW-1185">Reference proteome</keyword>
<proteinExistence type="inferred from homology"/>
<accession>P44488</accession>
<reference key="1">
    <citation type="journal article" date="1995" name="Science">
        <title>Whole-genome random sequencing and assembly of Haemophilus influenzae Rd.</title>
        <authorList>
            <person name="Fleischmann R.D."/>
            <person name="Adams M.D."/>
            <person name="White O."/>
            <person name="Clayton R.A."/>
            <person name="Kirkness E.F."/>
            <person name="Kerlavage A.R."/>
            <person name="Bult C.J."/>
            <person name="Tomb J.-F."/>
            <person name="Dougherty B.A."/>
            <person name="Merrick J.M."/>
            <person name="McKenney K."/>
            <person name="Sutton G.G."/>
            <person name="FitzHugh W."/>
            <person name="Fields C.A."/>
            <person name="Gocayne J.D."/>
            <person name="Scott J.D."/>
            <person name="Shirley R."/>
            <person name="Liu L.-I."/>
            <person name="Glodek A."/>
            <person name="Kelley J.M."/>
            <person name="Weidman J.F."/>
            <person name="Phillips C.A."/>
            <person name="Spriggs T."/>
            <person name="Hedblom E."/>
            <person name="Cotton M.D."/>
            <person name="Utterback T.R."/>
            <person name="Hanna M.C."/>
            <person name="Nguyen D.T."/>
            <person name="Saudek D.M."/>
            <person name="Brandon R.C."/>
            <person name="Fine L.D."/>
            <person name="Fritchman J.L."/>
            <person name="Fuhrmann J.L."/>
            <person name="Geoghagen N.S.M."/>
            <person name="Gnehm C.L."/>
            <person name="McDonald L.A."/>
            <person name="Small K.V."/>
            <person name="Fraser C.M."/>
            <person name="Smith H.O."/>
            <person name="Venter J.C."/>
        </authorList>
    </citation>
    <scope>NUCLEOTIDE SEQUENCE [LARGE SCALE GENOMIC DNA]</scope>
    <source>
        <strain>ATCC 51907 / DSM 11121 / KW20 / Rd</strain>
    </source>
</reference>
<protein>
    <recommendedName>
        <fullName>Mannonate dehydratase</fullName>
        <ecNumber>4.2.1.8</ecNumber>
    </recommendedName>
    <alternativeName>
        <fullName>D-mannonate hydro-lyase</fullName>
    </alternativeName>
</protein>
<comment type="function">
    <text evidence="1">Catalyzes the dehydration of D-mannonate.</text>
</comment>
<comment type="catalytic activity">
    <reaction>
        <text>D-mannonate = 2-dehydro-3-deoxy-D-gluconate + H2O</text>
        <dbReference type="Rhea" id="RHEA:20097"/>
        <dbReference type="ChEBI" id="CHEBI:15377"/>
        <dbReference type="ChEBI" id="CHEBI:17767"/>
        <dbReference type="ChEBI" id="CHEBI:57990"/>
        <dbReference type="EC" id="4.2.1.8"/>
    </reaction>
</comment>
<comment type="cofactor">
    <cofactor evidence="1">
        <name>Fe(2+)</name>
        <dbReference type="ChEBI" id="CHEBI:29033"/>
    </cofactor>
    <cofactor evidence="1">
        <name>Mn(2+)</name>
        <dbReference type="ChEBI" id="CHEBI:29035"/>
    </cofactor>
</comment>
<comment type="pathway">
    <text>Carbohydrate metabolism; pentose and glucuronate interconversion.</text>
</comment>
<comment type="similarity">
    <text evidence="2">Belongs to the mannonate dehydratase family.</text>
</comment>
<organism>
    <name type="scientific">Haemophilus influenzae (strain ATCC 51907 / DSM 11121 / KW20 / Rd)</name>
    <dbReference type="NCBI Taxonomy" id="71421"/>
    <lineage>
        <taxon>Bacteria</taxon>
        <taxon>Pseudomonadati</taxon>
        <taxon>Pseudomonadota</taxon>
        <taxon>Gammaproteobacteria</taxon>
        <taxon>Pasteurellales</taxon>
        <taxon>Pasteurellaceae</taxon>
        <taxon>Haemophilus</taxon>
    </lineage>
</organism>
<dbReference type="EC" id="4.2.1.8"/>
<dbReference type="EMBL" id="L42023">
    <property type="protein sequence ID" value="AAC21733.1"/>
    <property type="molecule type" value="Genomic_DNA"/>
</dbReference>
<dbReference type="PIR" id="E64045">
    <property type="entry name" value="E64045"/>
</dbReference>
<dbReference type="RefSeq" id="NP_438228.1">
    <property type="nucleotide sequence ID" value="NC_000907.1"/>
</dbReference>
<dbReference type="SMR" id="P44488"/>
<dbReference type="STRING" id="71421.HI_0055"/>
<dbReference type="EnsemblBacteria" id="AAC21733">
    <property type="protein sequence ID" value="AAC21733"/>
    <property type="gene ID" value="HI_0055"/>
</dbReference>
<dbReference type="KEGG" id="hin:HI_0055"/>
<dbReference type="PATRIC" id="fig|71421.8.peg.55"/>
<dbReference type="eggNOG" id="COG1312">
    <property type="taxonomic scope" value="Bacteria"/>
</dbReference>
<dbReference type="HOGENOM" id="CLU_058621_2_0_6"/>
<dbReference type="OrthoDB" id="9780250at2"/>
<dbReference type="PhylomeDB" id="P44488"/>
<dbReference type="BioCyc" id="HINF71421:G1GJ1-56-MONOMER"/>
<dbReference type="UniPathway" id="UPA00246"/>
<dbReference type="Proteomes" id="UP000000579">
    <property type="component" value="Chromosome"/>
</dbReference>
<dbReference type="GO" id="GO:0008198">
    <property type="term" value="F:ferrous iron binding"/>
    <property type="evidence" value="ECO:0000318"/>
    <property type="project" value="GO_Central"/>
</dbReference>
<dbReference type="GO" id="GO:0030145">
    <property type="term" value="F:manganese ion binding"/>
    <property type="evidence" value="ECO:0000318"/>
    <property type="project" value="GO_Central"/>
</dbReference>
<dbReference type="GO" id="GO:0008927">
    <property type="term" value="F:mannonate dehydratase activity"/>
    <property type="evidence" value="ECO:0000318"/>
    <property type="project" value="GO_Central"/>
</dbReference>
<dbReference type="GO" id="GO:0042840">
    <property type="term" value="P:D-glucuronate catabolic process"/>
    <property type="evidence" value="ECO:0000318"/>
    <property type="project" value="GO_Central"/>
</dbReference>
<dbReference type="FunFam" id="3.20.20.150:FF:000004">
    <property type="entry name" value="Mannonate dehydratase"/>
    <property type="match status" value="1"/>
</dbReference>
<dbReference type="FunFam" id="3.20.20.150:FF:000005">
    <property type="entry name" value="Mannonate dehydratase"/>
    <property type="match status" value="1"/>
</dbReference>
<dbReference type="Gene3D" id="3.20.20.150">
    <property type="entry name" value="Divalent-metal-dependent TIM barrel enzymes"/>
    <property type="match status" value="2"/>
</dbReference>
<dbReference type="HAMAP" id="MF_00106">
    <property type="entry name" value="UxuA"/>
    <property type="match status" value="1"/>
</dbReference>
<dbReference type="InterPro" id="IPR004628">
    <property type="entry name" value="Man_deHydtase"/>
</dbReference>
<dbReference type="InterPro" id="IPR036237">
    <property type="entry name" value="Xyl_isomerase-like_sf"/>
</dbReference>
<dbReference type="NCBIfam" id="NF003027">
    <property type="entry name" value="PRK03906.1"/>
    <property type="match status" value="1"/>
</dbReference>
<dbReference type="NCBIfam" id="TIGR00695">
    <property type="entry name" value="uxuA"/>
    <property type="match status" value="1"/>
</dbReference>
<dbReference type="PANTHER" id="PTHR30387">
    <property type="entry name" value="MANNONATE DEHYDRATASE"/>
    <property type="match status" value="1"/>
</dbReference>
<dbReference type="PANTHER" id="PTHR30387:SF2">
    <property type="entry name" value="MANNONATE DEHYDRATASE"/>
    <property type="match status" value="1"/>
</dbReference>
<dbReference type="Pfam" id="PF03786">
    <property type="entry name" value="UxuA"/>
    <property type="match status" value="1"/>
</dbReference>
<dbReference type="PIRSF" id="PIRSF016049">
    <property type="entry name" value="Man_dehyd"/>
    <property type="match status" value="1"/>
</dbReference>
<dbReference type="SUPFAM" id="SSF51658">
    <property type="entry name" value="Xylose isomerase-like"/>
    <property type="match status" value="1"/>
</dbReference>
<sequence>MEQAWRWYGPKDPVSLSDIRQAGATGIVTALHHIPNGEIWGIEEIKKRKTEIENAGLSWSVVESVPVHEEIKTQTGNYQKWINNYKQTLRNLAQCGIDTVCYNFMPVLDWTRTDLAYELPDGSKALRFDHIAFAAFELHILKRPDAEKTYNQEEQVAARTYYDNMSEQDIAQLTRNIIAGLPGAEEGYTLDEFQTQLDRYKDISSEKFRTHLAYFLNEIVPVAQEIGIKMAIHPDDPPRPILGLPRIVSTIEDMQWFVETQPLPANGFTMCTGSYGVRSDNDLVKMTEQFADRIYFAHLRSTQREGNPLTFHEAAHLEGDVDMFNVVKALLNEEYRRLNQGETRLIPMRPDHGHQILDDLRKKTNPGYSAIGRLKGLAEFRGLEMALKKVYFNK</sequence>
<evidence type="ECO:0000250" key="1"/>
<evidence type="ECO:0000305" key="2"/>
<name>UXUA_HAEIN</name>